<reference key="1">
    <citation type="journal article" date="2008" name="BMC Genomics">
        <title>Comparative genomic analysis of the gut bacterium Bifidobacterium longum reveals loci susceptible to deletion during pure culture growth.</title>
        <authorList>
            <person name="Lee J.H."/>
            <person name="Karamychev V.N."/>
            <person name="Kozyavkin S.A."/>
            <person name="Mills D."/>
            <person name="Pavlov A.R."/>
            <person name="Pavlova N.V."/>
            <person name="Polouchine N.N."/>
            <person name="Richardson P.M."/>
            <person name="Shakhova V.V."/>
            <person name="Slesarev A.I."/>
            <person name="Weimer B."/>
            <person name="O'Sullivan D.J."/>
        </authorList>
    </citation>
    <scope>NUCLEOTIDE SEQUENCE [LARGE SCALE GENOMIC DNA]</scope>
    <source>
        <strain>DJO10A</strain>
    </source>
</reference>
<organism>
    <name type="scientific">Bifidobacterium longum (strain DJO10A)</name>
    <dbReference type="NCBI Taxonomy" id="205913"/>
    <lineage>
        <taxon>Bacteria</taxon>
        <taxon>Bacillati</taxon>
        <taxon>Actinomycetota</taxon>
        <taxon>Actinomycetes</taxon>
        <taxon>Bifidobacteriales</taxon>
        <taxon>Bifidobacteriaceae</taxon>
        <taxon>Bifidobacterium</taxon>
    </lineage>
</organism>
<evidence type="ECO:0000250" key="1"/>
<evidence type="ECO:0000255" key="2">
    <source>
        <dbReference type="HAMAP-Rule" id="MF_00118"/>
    </source>
</evidence>
<protein>
    <recommendedName>
        <fullName evidence="2">Elongation factor Tu</fullName>
        <shortName evidence="2">EF-Tu</shortName>
        <ecNumber evidence="2">3.6.5.3</ecNumber>
    </recommendedName>
</protein>
<accession>B3DT29</accession>
<gene>
    <name evidence="2" type="primary">tuf</name>
    <name type="ordered locus">BLD_0852</name>
</gene>
<name>EFTU_BIFLD</name>
<sequence length="399" mass="43936">MAKEKYERTKPHVNIGTIGHVDHGKTTLTAAISKVLHEEFPDVNPEYDFNQIDSAPEEAARGITINIAHIEYQTEKRHYAHVDCPGHADFVKNMITGAAQMDGAILVVAATDGPMAQTREHVLLARQVGVPKILVALNKCDMVDDEELIELVEEEVRDLLDENGFDRDCPVIHTSAYGALHDDAPDHEKWVQSVKDLMDAVDDYIPTPVHDLDKPFLMPIEDVFTISGRGTVVTGRVERGQLAVNTPVEIVGIRPTQQTTVTSIETFHKTMDACEAGDNTGLLLRGLGRDDVERGQVVAKPGSVTPHTKFEGEVYVLTKDEGGRHSPFFSNYRPQFYFRTTDVTGVIELPEGVEMVQPGDHATFTVELIQPIAMEEGLTFAVREGGHTVGSGRVTKILA</sequence>
<comment type="function">
    <text evidence="2">GTP hydrolase that promotes the GTP-dependent binding of aminoacyl-tRNA to the A-site of ribosomes during protein biosynthesis.</text>
</comment>
<comment type="catalytic activity">
    <reaction evidence="2">
        <text>GTP + H2O = GDP + phosphate + H(+)</text>
        <dbReference type="Rhea" id="RHEA:19669"/>
        <dbReference type="ChEBI" id="CHEBI:15377"/>
        <dbReference type="ChEBI" id="CHEBI:15378"/>
        <dbReference type="ChEBI" id="CHEBI:37565"/>
        <dbReference type="ChEBI" id="CHEBI:43474"/>
        <dbReference type="ChEBI" id="CHEBI:58189"/>
        <dbReference type="EC" id="3.6.5.3"/>
    </reaction>
    <physiologicalReaction direction="left-to-right" evidence="2">
        <dbReference type="Rhea" id="RHEA:19670"/>
    </physiologicalReaction>
</comment>
<comment type="subunit">
    <text evidence="2">Monomer.</text>
</comment>
<comment type="subcellular location">
    <subcellularLocation>
        <location evidence="2">Cytoplasm</location>
    </subcellularLocation>
</comment>
<comment type="similarity">
    <text evidence="2">Belongs to the TRAFAC class translation factor GTPase superfamily. Classic translation factor GTPase family. EF-Tu/EF-1A subfamily.</text>
</comment>
<keyword id="KW-0963">Cytoplasm</keyword>
<keyword id="KW-0251">Elongation factor</keyword>
<keyword id="KW-0342">GTP-binding</keyword>
<keyword id="KW-0378">Hydrolase</keyword>
<keyword id="KW-0460">Magnesium</keyword>
<keyword id="KW-0479">Metal-binding</keyword>
<keyword id="KW-0547">Nucleotide-binding</keyword>
<keyword id="KW-0648">Protein biosynthesis</keyword>
<feature type="chain" id="PRO_1000095050" description="Elongation factor Tu">
    <location>
        <begin position="1"/>
        <end position="399"/>
    </location>
</feature>
<feature type="domain" description="tr-type G">
    <location>
        <begin position="10"/>
        <end position="209"/>
    </location>
</feature>
<feature type="region of interest" description="G1" evidence="1">
    <location>
        <begin position="19"/>
        <end position="26"/>
    </location>
</feature>
<feature type="region of interest" description="G2" evidence="1">
    <location>
        <begin position="62"/>
        <end position="66"/>
    </location>
</feature>
<feature type="region of interest" description="G3" evidence="1">
    <location>
        <begin position="83"/>
        <end position="86"/>
    </location>
</feature>
<feature type="region of interest" description="G4" evidence="1">
    <location>
        <begin position="138"/>
        <end position="141"/>
    </location>
</feature>
<feature type="region of interest" description="G5" evidence="1">
    <location>
        <begin position="175"/>
        <end position="177"/>
    </location>
</feature>
<feature type="binding site" evidence="2">
    <location>
        <begin position="19"/>
        <end position="26"/>
    </location>
    <ligand>
        <name>GTP</name>
        <dbReference type="ChEBI" id="CHEBI:37565"/>
    </ligand>
</feature>
<feature type="binding site" evidence="2">
    <location>
        <position position="26"/>
    </location>
    <ligand>
        <name>Mg(2+)</name>
        <dbReference type="ChEBI" id="CHEBI:18420"/>
    </ligand>
</feature>
<feature type="binding site" evidence="2">
    <location>
        <begin position="83"/>
        <end position="87"/>
    </location>
    <ligand>
        <name>GTP</name>
        <dbReference type="ChEBI" id="CHEBI:37565"/>
    </ligand>
</feature>
<feature type="binding site" evidence="2">
    <location>
        <begin position="138"/>
        <end position="141"/>
    </location>
    <ligand>
        <name>GTP</name>
        <dbReference type="ChEBI" id="CHEBI:37565"/>
    </ligand>
</feature>
<dbReference type="EC" id="3.6.5.3" evidence="2"/>
<dbReference type="EMBL" id="CP000605">
    <property type="protein sequence ID" value="ACD98298.1"/>
    <property type="molecule type" value="Genomic_DNA"/>
</dbReference>
<dbReference type="RefSeq" id="WP_007051202.1">
    <property type="nucleotide sequence ID" value="NZ_AABM02000006.1"/>
</dbReference>
<dbReference type="SMR" id="B3DT29"/>
<dbReference type="GeneID" id="69577755"/>
<dbReference type="KEGG" id="blj:BLD_0852"/>
<dbReference type="HOGENOM" id="CLU_007265_0_1_11"/>
<dbReference type="Proteomes" id="UP000002419">
    <property type="component" value="Chromosome"/>
</dbReference>
<dbReference type="GO" id="GO:0005829">
    <property type="term" value="C:cytosol"/>
    <property type="evidence" value="ECO:0007669"/>
    <property type="project" value="TreeGrafter"/>
</dbReference>
<dbReference type="GO" id="GO:0005525">
    <property type="term" value="F:GTP binding"/>
    <property type="evidence" value="ECO:0007669"/>
    <property type="project" value="UniProtKB-UniRule"/>
</dbReference>
<dbReference type="GO" id="GO:0003924">
    <property type="term" value="F:GTPase activity"/>
    <property type="evidence" value="ECO:0007669"/>
    <property type="project" value="InterPro"/>
</dbReference>
<dbReference type="GO" id="GO:0003746">
    <property type="term" value="F:translation elongation factor activity"/>
    <property type="evidence" value="ECO:0007669"/>
    <property type="project" value="UniProtKB-UniRule"/>
</dbReference>
<dbReference type="CDD" id="cd01884">
    <property type="entry name" value="EF_Tu"/>
    <property type="match status" value="1"/>
</dbReference>
<dbReference type="CDD" id="cd03697">
    <property type="entry name" value="EFTU_II"/>
    <property type="match status" value="1"/>
</dbReference>
<dbReference type="CDD" id="cd03707">
    <property type="entry name" value="EFTU_III"/>
    <property type="match status" value="1"/>
</dbReference>
<dbReference type="FunFam" id="2.40.30.10:FF:000001">
    <property type="entry name" value="Elongation factor Tu"/>
    <property type="match status" value="1"/>
</dbReference>
<dbReference type="FunFam" id="3.40.50.300:FF:000003">
    <property type="entry name" value="Elongation factor Tu"/>
    <property type="match status" value="1"/>
</dbReference>
<dbReference type="Gene3D" id="3.40.50.300">
    <property type="entry name" value="P-loop containing nucleotide triphosphate hydrolases"/>
    <property type="match status" value="1"/>
</dbReference>
<dbReference type="Gene3D" id="2.40.30.10">
    <property type="entry name" value="Translation factors"/>
    <property type="match status" value="2"/>
</dbReference>
<dbReference type="HAMAP" id="MF_00118_B">
    <property type="entry name" value="EF_Tu_B"/>
    <property type="match status" value="1"/>
</dbReference>
<dbReference type="InterPro" id="IPR041709">
    <property type="entry name" value="EF-Tu_GTP-bd"/>
</dbReference>
<dbReference type="InterPro" id="IPR050055">
    <property type="entry name" value="EF-Tu_GTPase"/>
</dbReference>
<dbReference type="InterPro" id="IPR004161">
    <property type="entry name" value="EFTu-like_2"/>
</dbReference>
<dbReference type="InterPro" id="IPR033720">
    <property type="entry name" value="EFTU_2"/>
</dbReference>
<dbReference type="InterPro" id="IPR031157">
    <property type="entry name" value="G_TR_CS"/>
</dbReference>
<dbReference type="InterPro" id="IPR027417">
    <property type="entry name" value="P-loop_NTPase"/>
</dbReference>
<dbReference type="InterPro" id="IPR005225">
    <property type="entry name" value="Small_GTP-bd"/>
</dbReference>
<dbReference type="InterPro" id="IPR000795">
    <property type="entry name" value="T_Tr_GTP-bd_dom"/>
</dbReference>
<dbReference type="InterPro" id="IPR009000">
    <property type="entry name" value="Transl_B-barrel_sf"/>
</dbReference>
<dbReference type="InterPro" id="IPR009001">
    <property type="entry name" value="Transl_elong_EF1A/Init_IF2_C"/>
</dbReference>
<dbReference type="InterPro" id="IPR004541">
    <property type="entry name" value="Transl_elong_EFTu/EF1A_bac/org"/>
</dbReference>
<dbReference type="InterPro" id="IPR004160">
    <property type="entry name" value="Transl_elong_EFTu/EF1A_C"/>
</dbReference>
<dbReference type="NCBIfam" id="TIGR00485">
    <property type="entry name" value="EF-Tu"/>
    <property type="match status" value="1"/>
</dbReference>
<dbReference type="NCBIfam" id="NF000766">
    <property type="entry name" value="PRK00049.1"/>
    <property type="match status" value="1"/>
</dbReference>
<dbReference type="NCBIfam" id="NF009372">
    <property type="entry name" value="PRK12735.1"/>
    <property type="match status" value="1"/>
</dbReference>
<dbReference type="NCBIfam" id="NF009373">
    <property type="entry name" value="PRK12736.1"/>
    <property type="match status" value="1"/>
</dbReference>
<dbReference type="NCBIfam" id="TIGR00231">
    <property type="entry name" value="small_GTP"/>
    <property type="match status" value="1"/>
</dbReference>
<dbReference type="PANTHER" id="PTHR43721:SF22">
    <property type="entry name" value="ELONGATION FACTOR TU, MITOCHONDRIAL"/>
    <property type="match status" value="1"/>
</dbReference>
<dbReference type="PANTHER" id="PTHR43721">
    <property type="entry name" value="ELONGATION FACTOR TU-RELATED"/>
    <property type="match status" value="1"/>
</dbReference>
<dbReference type="Pfam" id="PF00009">
    <property type="entry name" value="GTP_EFTU"/>
    <property type="match status" value="1"/>
</dbReference>
<dbReference type="Pfam" id="PF03144">
    <property type="entry name" value="GTP_EFTU_D2"/>
    <property type="match status" value="1"/>
</dbReference>
<dbReference type="Pfam" id="PF03143">
    <property type="entry name" value="GTP_EFTU_D3"/>
    <property type="match status" value="1"/>
</dbReference>
<dbReference type="PRINTS" id="PR00315">
    <property type="entry name" value="ELONGATNFCT"/>
</dbReference>
<dbReference type="SUPFAM" id="SSF50465">
    <property type="entry name" value="EF-Tu/eEF-1alpha/eIF2-gamma C-terminal domain"/>
    <property type="match status" value="1"/>
</dbReference>
<dbReference type="SUPFAM" id="SSF52540">
    <property type="entry name" value="P-loop containing nucleoside triphosphate hydrolases"/>
    <property type="match status" value="1"/>
</dbReference>
<dbReference type="SUPFAM" id="SSF50447">
    <property type="entry name" value="Translation proteins"/>
    <property type="match status" value="1"/>
</dbReference>
<dbReference type="PROSITE" id="PS00301">
    <property type="entry name" value="G_TR_1"/>
    <property type="match status" value="1"/>
</dbReference>
<dbReference type="PROSITE" id="PS51722">
    <property type="entry name" value="G_TR_2"/>
    <property type="match status" value="1"/>
</dbReference>
<proteinExistence type="inferred from homology"/>